<feature type="chain" id="PRO_0000280027" description="Glutathione import ATP-binding protein GsiA">
    <location>
        <begin position="1"/>
        <end position="623"/>
    </location>
</feature>
<feature type="domain" description="ABC transporter 1" evidence="2">
    <location>
        <begin position="15"/>
        <end position="269"/>
    </location>
</feature>
<feature type="domain" description="ABC transporter 2" evidence="2">
    <location>
        <begin position="314"/>
        <end position="564"/>
    </location>
</feature>
<feature type="binding site" evidence="2">
    <location>
        <begin position="49"/>
        <end position="56"/>
    </location>
    <ligand>
        <name>ATP</name>
        <dbReference type="ChEBI" id="CHEBI:30616"/>
    </ligand>
</feature>
<feature type="binding site" evidence="2">
    <location>
        <begin position="357"/>
        <end position="364"/>
    </location>
    <ligand>
        <name>ATP</name>
        <dbReference type="ChEBI" id="CHEBI:30616"/>
    </ligand>
</feature>
<organism>
    <name type="scientific">Shigella boydii serotype 4 (strain Sb227)</name>
    <dbReference type="NCBI Taxonomy" id="300268"/>
    <lineage>
        <taxon>Bacteria</taxon>
        <taxon>Pseudomonadati</taxon>
        <taxon>Pseudomonadota</taxon>
        <taxon>Gammaproteobacteria</taxon>
        <taxon>Enterobacterales</taxon>
        <taxon>Enterobacteriaceae</taxon>
        <taxon>Shigella</taxon>
    </lineage>
</organism>
<comment type="function">
    <text evidence="1">Part of the ABC transporter complex GsiABCD involved in glutathione import. Responsible for energy coupling to the transport system.</text>
</comment>
<comment type="catalytic activity">
    <reaction evidence="1">
        <text>glutathione(out) + ATP + H2O = glutathione(in) + ADP + phosphate + H(+)</text>
        <dbReference type="Rhea" id="RHEA:29791"/>
        <dbReference type="ChEBI" id="CHEBI:15377"/>
        <dbReference type="ChEBI" id="CHEBI:15378"/>
        <dbReference type="ChEBI" id="CHEBI:30616"/>
        <dbReference type="ChEBI" id="CHEBI:43474"/>
        <dbReference type="ChEBI" id="CHEBI:57925"/>
        <dbReference type="ChEBI" id="CHEBI:456216"/>
        <dbReference type="EC" id="7.4.2.10"/>
    </reaction>
</comment>
<comment type="subunit">
    <text evidence="1">The complex is composed of two ATP-binding proteins (GsiA), two transmembrane proteins (GsiC and GsiD) and a solute-binding protein (GsiB).</text>
</comment>
<comment type="subcellular location">
    <subcellularLocation>
        <location evidence="1">Cell inner membrane</location>
        <topology evidence="1">Peripheral membrane protein</topology>
    </subcellularLocation>
</comment>
<comment type="similarity">
    <text evidence="3">Belongs to the ABC transporter superfamily. Glutathione importer (TC 3.A.1.5.11) family.</text>
</comment>
<comment type="sequence caution" evidence="3">
    <conflict type="erroneous initiation">
        <sequence resource="EMBL-CDS" id="ABB65393"/>
    </conflict>
</comment>
<keyword id="KW-0067">ATP-binding</keyword>
<keyword id="KW-0997">Cell inner membrane</keyword>
<keyword id="KW-1003">Cell membrane</keyword>
<keyword id="KW-0378">Hydrolase</keyword>
<keyword id="KW-0472">Membrane</keyword>
<keyword id="KW-0547">Nucleotide-binding</keyword>
<keyword id="KW-0677">Repeat</keyword>
<keyword id="KW-1278">Translocase</keyword>
<keyword id="KW-0813">Transport</keyword>
<protein>
    <recommendedName>
        <fullName evidence="1">Glutathione import ATP-binding protein GsiA</fullName>
        <ecNumber evidence="1">7.4.2.10</ecNumber>
    </recommendedName>
</protein>
<name>GSIA_SHIBS</name>
<proteinExistence type="inferred from homology"/>
<accession>Q323W5</accession>
<dbReference type="EC" id="7.4.2.10" evidence="1"/>
<dbReference type="EMBL" id="CP000036">
    <property type="protein sequence ID" value="ABB65393.1"/>
    <property type="status" value="ALT_INIT"/>
    <property type="molecule type" value="Genomic_DNA"/>
</dbReference>
<dbReference type="RefSeq" id="WP_024258745.1">
    <property type="nucleotide sequence ID" value="NC_007613.1"/>
</dbReference>
<dbReference type="SMR" id="Q323W5"/>
<dbReference type="KEGG" id="sbo:SBO_0719"/>
<dbReference type="HOGENOM" id="CLU_000604_86_2_6"/>
<dbReference type="Proteomes" id="UP000007067">
    <property type="component" value="Chromosome"/>
</dbReference>
<dbReference type="GO" id="GO:0005886">
    <property type="term" value="C:plasma membrane"/>
    <property type="evidence" value="ECO:0007669"/>
    <property type="project" value="UniProtKB-SubCell"/>
</dbReference>
<dbReference type="GO" id="GO:0005524">
    <property type="term" value="F:ATP binding"/>
    <property type="evidence" value="ECO:0007669"/>
    <property type="project" value="UniProtKB-KW"/>
</dbReference>
<dbReference type="GO" id="GO:0016887">
    <property type="term" value="F:ATP hydrolysis activity"/>
    <property type="evidence" value="ECO:0007669"/>
    <property type="project" value="InterPro"/>
</dbReference>
<dbReference type="GO" id="GO:0015833">
    <property type="term" value="P:peptide transport"/>
    <property type="evidence" value="ECO:0007669"/>
    <property type="project" value="InterPro"/>
</dbReference>
<dbReference type="GO" id="GO:0055085">
    <property type="term" value="P:transmembrane transport"/>
    <property type="evidence" value="ECO:0007669"/>
    <property type="project" value="UniProtKB-ARBA"/>
</dbReference>
<dbReference type="CDD" id="cd03257">
    <property type="entry name" value="ABC_NikE_OppD_transporters"/>
    <property type="match status" value="2"/>
</dbReference>
<dbReference type="FunFam" id="3.40.50.300:FF:001061">
    <property type="entry name" value="Glutathione import ATP-binding protein GsiA"/>
    <property type="match status" value="1"/>
</dbReference>
<dbReference type="FunFam" id="3.40.50.300:FF:000016">
    <property type="entry name" value="Oligopeptide ABC transporter ATP-binding component"/>
    <property type="match status" value="1"/>
</dbReference>
<dbReference type="Gene3D" id="3.40.50.300">
    <property type="entry name" value="P-loop containing nucleotide triphosphate hydrolases"/>
    <property type="match status" value="2"/>
</dbReference>
<dbReference type="InterPro" id="IPR003593">
    <property type="entry name" value="AAA+_ATPase"/>
</dbReference>
<dbReference type="InterPro" id="IPR050319">
    <property type="entry name" value="ABC_transp_ATP-bind"/>
</dbReference>
<dbReference type="InterPro" id="IPR003439">
    <property type="entry name" value="ABC_transporter-like_ATP-bd"/>
</dbReference>
<dbReference type="InterPro" id="IPR017871">
    <property type="entry name" value="ABC_transporter-like_CS"/>
</dbReference>
<dbReference type="InterPro" id="IPR013563">
    <property type="entry name" value="Oligopep_ABC_C"/>
</dbReference>
<dbReference type="InterPro" id="IPR027417">
    <property type="entry name" value="P-loop_NTPase"/>
</dbReference>
<dbReference type="NCBIfam" id="NF007613">
    <property type="entry name" value="PRK10261.1"/>
    <property type="match status" value="1"/>
</dbReference>
<dbReference type="NCBIfam" id="NF007739">
    <property type="entry name" value="PRK10419.1"/>
    <property type="match status" value="2"/>
</dbReference>
<dbReference type="NCBIfam" id="NF008453">
    <property type="entry name" value="PRK11308.1"/>
    <property type="match status" value="2"/>
</dbReference>
<dbReference type="PANTHER" id="PTHR43776:SF15">
    <property type="entry name" value="GLUTATHIONE IMPORT ATP-BINDING PROTEIN GSIA"/>
    <property type="match status" value="1"/>
</dbReference>
<dbReference type="PANTHER" id="PTHR43776">
    <property type="entry name" value="TRANSPORT ATP-BINDING PROTEIN"/>
    <property type="match status" value="1"/>
</dbReference>
<dbReference type="Pfam" id="PF00005">
    <property type="entry name" value="ABC_tran"/>
    <property type="match status" value="2"/>
</dbReference>
<dbReference type="Pfam" id="PF08352">
    <property type="entry name" value="oligo_HPY"/>
    <property type="match status" value="2"/>
</dbReference>
<dbReference type="SMART" id="SM00382">
    <property type="entry name" value="AAA"/>
    <property type="match status" value="2"/>
</dbReference>
<dbReference type="SUPFAM" id="SSF52540">
    <property type="entry name" value="P-loop containing nucleoside triphosphate hydrolases"/>
    <property type="match status" value="2"/>
</dbReference>
<dbReference type="PROSITE" id="PS00211">
    <property type="entry name" value="ABC_TRANSPORTER_1"/>
    <property type="match status" value="2"/>
</dbReference>
<dbReference type="PROSITE" id="PS50893">
    <property type="entry name" value="ABC_TRANSPORTER_2"/>
    <property type="match status" value="2"/>
</dbReference>
<evidence type="ECO:0000250" key="1">
    <source>
        <dbReference type="UniProtKB" id="P75796"/>
    </source>
</evidence>
<evidence type="ECO:0000255" key="2">
    <source>
        <dbReference type="PROSITE-ProRule" id="PRU00434"/>
    </source>
</evidence>
<evidence type="ECO:0000305" key="3"/>
<gene>
    <name evidence="1" type="primary">gsiA</name>
    <name type="ordered locus">SBO_0719</name>
</gene>
<reference key="1">
    <citation type="journal article" date="2005" name="Nucleic Acids Res.">
        <title>Genome dynamics and diversity of Shigella species, the etiologic agents of bacillary dysentery.</title>
        <authorList>
            <person name="Yang F."/>
            <person name="Yang J."/>
            <person name="Zhang X."/>
            <person name="Chen L."/>
            <person name="Jiang Y."/>
            <person name="Yan Y."/>
            <person name="Tang X."/>
            <person name="Wang J."/>
            <person name="Xiong Z."/>
            <person name="Dong J."/>
            <person name="Xue Y."/>
            <person name="Zhu Y."/>
            <person name="Xu X."/>
            <person name="Sun L."/>
            <person name="Chen S."/>
            <person name="Nie H."/>
            <person name="Peng J."/>
            <person name="Xu J."/>
            <person name="Wang Y."/>
            <person name="Yuan Z."/>
            <person name="Wen Y."/>
            <person name="Yao Z."/>
            <person name="Shen Y."/>
            <person name="Qiang B."/>
            <person name="Hou Y."/>
            <person name="Yu J."/>
            <person name="Jin Q."/>
        </authorList>
    </citation>
    <scope>NUCLEOTIDE SEQUENCE [LARGE SCALE GENOMIC DNA]</scope>
    <source>
        <strain>Sb227</strain>
    </source>
</reference>
<sequence length="623" mass="69118">MPHSDELDAGNVLAVENLNIAFMQDQQKIAAVRNLSFSLQRGETLAIVGESGSGKSVTALALMRLLEQAGGLVQCDKMLLQRRSREVIELSEQSAAQMRHVRGADMAMIFQEPMTSLNPVFTVGEQIAESIRLHQNASREEAMVEAKRMLDQVRIPEAQTILSRYPHQLSGGMRQRVMIAMALSCRPAVLIADEPTTALDVTIQAQILQLIKVLQKEMSMGVIFITHDMGVVAEIADRVLVMYQGEAVETGTVEQIFHAPQHPYTRALLAAVPQLGAMKGLDYPRRFPLISLEHPAKQEPPIEQKTVVDGEPVLRVRNLVTRFPLRSGLLNRVTREVHAVEKVSFDLWPGETLSLVGESGSGKSTTGRALLRLVESQGGEIIFNGQRIDTLSPGKLQALRRDIQFIFQDPYASLDPRQTIGDSIIEPLCVHGLLPGKDAAARVAWLLERVGLLPEHAWRYPHEFSGGQRQRICIARALALNPKVIIADEAVSALDVSIRGQIINLLLDLQRDFGIAYLFISHDMAVVERISHRVAVMYLGQIVEIGPRRAVFENPQHPYTRKLLAAVPVAEPSRQRPQRVLLSDDLPSNIHLRGEEVAAVLLQCVGPGHYVAQPQSEYAFMRR</sequence>